<feature type="chain" id="PRO_1000016823" description="Queuine tRNA-ribosyltransferase">
    <location>
        <begin position="1"/>
        <end position="372"/>
    </location>
</feature>
<feature type="region of interest" description="RNA binding" evidence="1">
    <location>
        <begin position="246"/>
        <end position="252"/>
    </location>
</feature>
<feature type="region of interest" description="RNA binding; important for wobble base 34 recognition" evidence="1">
    <location>
        <begin position="270"/>
        <end position="274"/>
    </location>
</feature>
<feature type="active site" description="Proton acceptor" evidence="1">
    <location>
        <position position="92"/>
    </location>
</feature>
<feature type="active site" description="Nucleophile" evidence="1">
    <location>
        <position position="265"/>
    </location>
</feature>
<feature type="binding site" evidence="1">
    <location>
        <begin position="92"/>
        <end position="96"/>
    </location>
    <ligand>
        <name>substrate</name>
    </ligand>
</feature>
<feature type="binding site" evidence="1">
    <location>
        <position position="146"/>
    </location>
    <ligand>
        <name>substrate</name>
    </ligand>
</feature>
<feature type="binding site" evidence="1">
    <location>
        <position position="188"/>
    </location>
    <ligand>
        <name>substrate</name>
    </ligand>
</feature>
<feature type="binding site" evidence="1">
    <location>
        <position position="215"/>
    </location>
    <ligand>
        <name>substrate</name>
    </ligand>
</feature>
<feature type="binding site" evidence="1">
    <location>
        <position position="303"/>
    </location>
    <ligand>
        <name>Zn(2+)</name>
        <dbReference type="ChEBI" id="CHEBI:29105"/>
    </ligand>
</feature>
<feature type="binding site" evidence="1">
    <location>
        <position position="305"/>
    </location>
    <ligand>
        <name>Zn(2+)</name>
        <dbReference type="ChEBI" id="CHEBI:29105"/>
    </ligand>
</feature>
<feature type="binding site" evidence="1">
    <location>
        <position position="308"/>
    </location>
    <ligand>
        <name>Zn(2+)</name>
        <dbReference type="ChEBI" id="CHEBI:29105"/>
    </ligand>
</feature>
<feature type="binding site" evidence="1">
    <location>
        <position position="334"/>
    </location>
    <ligand>
        <name>Zn(2+)</name>
        <dbReference type="ChEBI" id="CHEBI:29105"/>
    </ligand>
</feature>
<proteinExistence type="inferred from homology"/>
<name>TGT_PROM3</name>
<accession>A2CCL1</accession>
<gene>
    <name evidence="1" type="primary">tgt</name>
    <name type="ordered locus">P9303_24901</name>
</gene>
<evidence type="ECO:0000255" key="1">
    <source>
        <dbReference type="HAMAP-Rule" id="MF_00168"/>
    </source>
</evidence>
<comment type="function">
    <text evidence="1">Catalyzes the base-exchange of a guanine (G) residue with the queuine precursor 7-aminomethyl-7-deazaguanine (PreQ1) at position 34 (anticodon wobble position) in tRNAs with GU(N) anticodons (tRNA-Asp, -Asn, -His and -Tyr). Catalysis occurs through a double-displacement mechanism. The nucleophile active site attacks the C1' of nucleotide 34 to detach the guanine base from the RNA, forming a covalent enzyme-RNA intermediate. The proton acceptor active site deprotonates the incoming PreQ1, allowing a nucleophilic attack on the C1' of the ribose to form the product. After dissociation, two additional enzymatic reactions on the tRNA convert PreQ1 to queuine (Q), resulting in the hypermodified nucleoside queuosine (7-(((4,5-cis-dihydroxy-2-cyclopenten-1-yl)amino)methyl)-7-deazaguanosine).</text>
</comment>
<comment type="catalytic activity">
    <reaction evidence="1">
        <text>7-aminomethyl-7-carbaguanine + guanosine(34) in tRNA = 7-aminomethyl-7-carbaguanosine(34) in tRNA + guanine</text>
        <dbReference type="Rhea" id="RHEA:24104"/>
        <dbReference type="Rhea" id="RHEA-COMP:10341"/>
        <dbReference type="Rhea" id="RHEA-COMP:10342"/>
        <dbReference type="ChEBI" id="CHEBI:16235"/>
        <dbReference type="ChEBI" id="CHEBI:58703"/>
        <dbReference type="ChEBI" id="CHEBI:74269"/>
        <dbReference type="ChEBI" id="CHEBI:82833"/>
        <dbReference type="EC" id="2.4.2.29"/>
    </reaction>
</comment>
<comment type="cofactor">
    <cofactor evidence="1">
        <name>Zn(2+)</name>
        <dbReference type="ChEBI" id="CHEBI:29105"/>
    </cofactor>
    <text evidence="1">Binds 1 zinc ion per subunit.</text>
</comment>
<comment type="pathway">
    <text evidence="1">tRNA modification; tRNA-queuosine biosynthesis.</text>
</comment>
<comment type="subunit">
    <text evidence="1">Homodimer. Within each dimer, one monomer is responsible for RNA recognition and catalysis, while the other monomer binds to the replacement base PreQ1.</text>
</comment>
<comment type="similarity">
    <text evidence="1">Belongs to the queuine tRNA-ribosyltransferase family.</text>
</comment>
<keyword id="KW-0328">Glycosyltransferase</keyword>
<keyword id="KW-0479">Metal-binding</keyword>
<keyword id="KW-0671">Queuosine biosynthesis</keyword>
<keyword id="KW-0808">Transferase</keyword>
<keyword id="KW-0819">tRNA processing</keyword>
<keyword id="KW-0862">Zinc</keyword>
<protein>
    <recommendedName>
        <fullName evidence="1">Queuine tRNA-ribosyltransferase</fullName>
        <ecNumber evidence="1">2.4.2.29</ecNumber>
    </recommendedName>
    <alternativeName>
        <fullName evidence="1">Guanine insertion enzyme</fullName>
    </alternativeName>
    <alternativeName>
        <fullName evidence="1">tRNA-guanine transglycosylase</fullName>
    </alternativeName>
</protein>
<reference key="1">
    <citation type="journal article" date="2007" name="PLoS Genet.">
        <title>Patterns and implications of gene gain and loss in the evolution of Prochlorococcus.</title>
        <authorList>
            <person name="Kettler G.C."/>
            <person name="Martiny A.C."/>
            <person name="Huang K."/>
            <person name="Zucker J."/>
            <person name="Coleman M.L."/>
            <person name="Rodrigue S."/>
            <person name="Chen F."/>
            <person name="Lapidus A."/>
            <person name="Ferriera S."/>
            <person name="Johnson J."/>
            <person name="Steglich C."/>
            <person name="Church G.M."/>
            <person name="Richardson P."/>
            <person name="Chisholm S.W."/>
        </authorList>
    </citation>
    <scope>NUCLEOTIDE SEQUENCE [LARGE SCALE GENOMIC DNA]</scope>
    <source>
        <strain>MIT 9303</strain>
    </source>
</reference>
<dbReference type="EC" id="2.4.2.29" evidence="1"/>
<dbReference type="EMBL" id="CP000554">
    <property type="protein sequence ID" value="ABM79221.1"/>
    <property type="molecule type" value="Genomic_DNA"/>
</dbReference>
<dbReference type="RefSeq" id="WP_011827070.1">
    <property type="nucleotide sequence ID" value="NC_008820.1"/>
</dbReference>
<dbReference type="SMR" id="A2CCL1"/>
<dbReference type="STRING" id="59922.P9303_24901"/>
<dbReference type="KEGG" id="pmf:P9303_24901"/>
<dbReference type="HOGENOM" id="CLU_022060_0_1_3"/>
<dbReference type="BioCyc" id="PMAR59922:G1G80-2180-MONOMER"/>
<dbReference type="UniPathway" id="UPA00392"/>
<dbReference type="Proteomes" id="UP000002274">
    <property type="component" value="Chromosome"/>
</dbReference>
<dbReference type="GO" id="GO:0005829">
    <property type="term" value="C:cytosol"/>
    <property type="evidence" value="ECO:0007669"/>
    <property type="project" value="TreeGrafter"/>
</dbReference>
<dbReference type="GO" id="GO:0046872">
    <property type="term" value="F:metal ion binding"/>
    <property type="evidence" value="ECO:0007669"/>
    <property type="project" value="UniProtKB-KW"/>
</dbReference>
<dbReference type="GO" id="GO:0008479">
    <property type="term" value="F:tRNA-guanosine(34) queuine transglycosylase activity"/>
    <property type="evidence" value="ECO:0007669"/>
    <property type="project" value="UniProtKB-UniRule"/>
</dbReference>
<dbReference type="GO" id="GO:0008616">
    <property type="term" value="P:queuosine biosynthetic process"/>
    <property type="evidence" value="ECO:0007669"/>
    <property type="project" value="UniProtKB-UniRule"/>
</dbReference>
<dbReference type="GO" id="GO:0002099">
    <property type="term" value="P:tRNA wobble guanine modification"/>
    <property type="evidence" value="ECO:0007669"/>
    <property type="project" value="TreeGrafter"/>
</dbReference>
<dbReference type="GO" id="GO:0101030">
    <property type="term" value="P:tRNA-guanine transglycosylation"/>
    <property type="evidence" value="ECO:0007669"/>
    <property type="project" value="InterPro"/>
</dbReference>
<dbReference type="Gene3D" id="3.20.20.105">
    <property type="entry name" value="Queuine tRNA-ribosyltransferase-like"/>
    <property type="match status" value="1"/>
</dbReference>
<dbReference type="HAMAP" id="MF_00168">
    <property type="entry name" value="Q_tRNA_Tgt"/>
    <property type="match status" value="1"/>
</dbReference>
<dbReference type="InterPro" id="IPR050076">
    <property type="entry name" value="ArchSynthase1/Queuine_TRR"/>
</dbReference>
<dbReference type="InterPro" id="IPR004803">
    <property type="entry name" value="TGT"/>
</dbReference>
<dbReference type="InterPro" id="IPR036511">
    <property type="entry name" value="TGT-like_sf"/>
</dbReference>
<dbReference type="InterPro" id="IPR002616">
    <property type="entry name" value="tRNA_ribo_trans-like"/>
</dbReference>
<dbReference type="NCBIfam" id="TIGR00430">
    <property type="entry name" value="Q_tRNA_tgt"/>
    <property type="match status" value="1"/>
</dbReference>
<dbReference type="NCBIfam" id="TIGR00449">
    <property type="entry name" value="tgt_general"/>
    <property type="match status" value="1"/>
</dbReference>
<dbReference type="PANTHER" id="PTHR46499">
    <property type="entry name" value="QUEUINE TRNA-RIBOSYLTRANSFERASE"/>
    <property type="match status" value="1"/>
</dbReference>
<dbReference type="PANTHER" id="PTHR46499:SF1">
    <property type="entry name" value="QUEUINE TRNA-RIBOSYLTRANSFERASE"/>
    <property type="match status" value="1"/>
</dbReference>
<dbReference type="Pfam" id="PF01702">
    <property type="entry name" value="TGT"/>
    <property type="match status" value="1"/>
</dbReference>
<dbReference type="SUPFAM" id="SSF51713">
    <property type="entry name" value="tRNA-guanine transglycosylase"/>
    <property type="match status" value="1"/>
</dbReference>
<sequence>MFDFQINAHCSHTRARVGCFRTPHGSVNTPRFMPVGTLATVKGITATQLADTGAQMVLANTYHLHLQPGEGIVADAGGLHRFMGWDRPLLTDSGGFQIFSLADLNRIDDHGVVFRNPRNGSQIELTPERAIEIQMALGADVAMAFDQCPPYPASESDVEAACKRTHAWLERCSNTHQLTNQALFGIVQGGCFPHLREQSAQIVASFDLPGIAIGGVSVGEPVEDIHRIVRQVSPLLPQDRPRYLMGIGTLREIAIAVASGIDLFDCVLPTRLGRHGTALVAGERWNLRNARFREDHTPLDQSCTCTACRHHSRAYLHHLIRNEELLGLTLLSLHNLTQLIRFTSAISQAIQDDCFSEDFAPWQPDSAAHHTW</sequence>
<organism>
    <name type="scientific">Prochlorococcus marinus (strain MIT 9303)</name>
    <dbReference type="NCBI Taxonomy" id="59922"/>
    <lineage>
        <taxon>Bacteria</taxon>
        <taxon>Bacillati</taxon>
        <taxon>Cyanobacteriota</taxon>
        <taxon>Cyanophyceae</taxon>
        <taxon>Synechococcales</taxon>
        <taxon>Prochlorococcaceae</taxon>
        <taxon>Prochlorococcus</taxon>
    </lineage>
</organism>